<comment type="function">
    <text>Salivary protein that stabilizes saliva supersaturated with calcium salts by inhibiting the precipitation of calcium phosphate salts. It also modulates hydroxyapatite crystal formation on the tooth surface.</text>
</comment>
<comment type="subcellular location">
    <subcellularLocation>
        <location>Secreted</location>
    </subcellularLocation>
</comment>
<comment type="tissue specificity">
    <text>Secreted by parotid and submandibular glands.</text>
</comment>
<comment type="similarity">
    <text evidence="3">Belongs to the histatin/statherin family.</text>
</comment>
<sequence length="42" mass="5207">DSSEEKFLRRLRRFDEGRYGPYQPFVPPPLYPQPYQPYQPQY</sequence>
<keyword id="KW-0091">Biomineralization</keyword>
<keyword id="KW-0903">Direct protein sequencing</keyword>
<keyword id="KW-0597">Phosphoprotein</keyword>
<keyword id="KW-0964">Secreted</keyword>
<name>STAT_MACAR</name>
<dbReference type="PIR" id="JK0224">
    <property type="entry name" value="JK0224"/>
</dbReference>
<dbReference type="iPTMnet" id="P14709"/>
<dbReference type="GO" id="GO:0005576">
    <property type="term" value="C:extracellular region"/>
    <property type="evidence" value="ECO:0007669"/>
    <property type="project" value="UniProtKB-SubCell"/>
</dbReference>
<dbReference type="GO" id="GO:0046848">
    <property type="term" value="F:hydroxyapatite binding"/>
    <property type="evidence" value="ECO:0007669"/>
    <property type="project" value="InterPro"/>
</dbReference>
<dbReference type="GO" id="GO:0031214">
    <property type="term" value="P:biomineral tissue development"/>
    <property type="evidence" value="ECO:0007669"/>
    <property type="project" value="UniProtKB-KW"/>
</dbReference>
<dbReference type="GO" id="GO:0042742">
    <property type="term" value="P:defense response to bacterium"/>
    <property type="evidence" value="ECO:0007669"/>
    <property type="project" value="InterPro"/>
</dbReference>
<dbReference type="GO" id="GO:0030500">
    <property type="term" value="P:regulation of bone mineralization"/>
    <property type="evidence" value="ECO:0007669"/>
    <property type="project" value="InterPro"/>
</dbReference>
<dbReference type="InterPro" id="IPR005575">
    <property type="entry name" value="Statherin"/>
</dbReference>
<dbReference type="Pfam" id="PF03875">
    <property type="entry name" value="Statherin"/>
    <property type="match status" value="1"/>
</dbReference>
<dbReference type="PIRSF" id="PIRSF002565">
    <property type="entry name" value="Statherin"/>
    <property type="match status" value="1"/>
</dbReference>
<gene>
    <name type="primary">STATH</name>
</gene>
<protein>
    <recommendedName>
        <fullName>Statherin</fullName>
    </recommendedName>
</protein>
<feature type="chain" id="PRO_0000072242" description="Statherin">
    <location>
        <begin position="1"/>
        <end position="42"/>
    </location>
</feature>
<feature type="region of interest" description="Hydroxyapatite-binding; inhibits crystal growth">
    <location>
        <begin position="1"/>
        <end position="6"/>
    </location>
</feature>
<feature type="region of interest" description="Disordered" evidence="1">
    <location>
        <begin position="18"/>
        <end position="42"/>
    </location>
</feature>
<feature type="region of interest" description="Hydrophobic; inhibits precipitation of calcium phosphate salts">
    <location>
        <begin position="18"/>
        <end position="42"/>
    </location>
</feature>
<feature type="compositionally biased region" description="Pro residues" evidence="1">
    <location>
        <begin position="24"/>
        <end position="42"/>
    </location>
</feature>
<feature type="modified residue" description="Phosphoserine" evidence="2">
    <location>
        <position position="2"/>
    </location>
</feature>
<feature type="modified residue" description="Phosphoserine" evidence="2">
    <location>
        <position position="3"/>
    </location>
</feature>
<organism>
    <name type="scientific">Macaca arctoides</name>
    <name type="common">Stump-tailed macaque</name>
    <dbReference type="NCBI Taxonomy" id="9540"/>
    <lineage>
        <taxon>Eukaryota</taxon>
        <taxon>Metazoa</taxon>
        <taxon>Chordata</taxon>
        <taxon>Craniata</taxon>
        <taxon>Vertebrata</taxon>
        <taxon>Euteleostomi</taxon>
        <taxon>Mammalia</taxon>
        <taxon>Eutheria</taxon>
        <taxon>Euarchontoglires</taxon>
        <taxon>Primates</taxon>
        <taxon>Haplorrhini</taxon>
        <taxon>Catarrhini</taxon>
        <taxon>Cercopithecidae</taxon>
        <taxon>Cercopithecinae</taxon>
        <taxon>Macaca</taxon>
    </lineage>
</organism>
<reference key="1">
    <citation type="journal article" date="1989" name="Int. J. Pept. Protein Res.">
        <title>Complete primary structure of statherin, a potent inhibitor of calcium phosphate precipitation, from the saliva of the monkey, Macaca arctoides.</title>
        <authorList>
            <person name="Schlesinger D.H."/>
            <person name="Hay D.I."/>
            <person name="Levine M.J."/>
        </authorList>
    </citation>
    <scope>PROTEIN SEQUENCE</scope>
    <scope>PHOSPHORYLATION AT SER-2 AND SER-3</scope>
</reference>
<accession>P14709</accession>
<evidence type="ECO:0000256" key="1">
    <source>
        <dbReference type="SAM" id="MobiDB-lite"/>
    </source>
</evidence>
<evidence type="ECO:0000269" key="2">
    <source>
    </source>
</evidence>
<evidence type="ECO:0000305" key="3"/>
<proteinExistence type="evidence at protein level"/>